<accession>A7MEB1</accession>
<comment type="function">
    <text evidence="1">Catalyzes the conversion of S-adenosyl-L-methionine (SAM) to carboxy-S-adenosyl-L-methionine (Cx-SAM).</text>
</comment>
<comment type="catalytic activity">
    <reaction evidence="1">
        <text>prephenate + S-adenosyl-L-methionine = carboxy-S-adenosyl-L-methionine + 3-phenylpyruvate + H2O</text>
        <dbReference type="Rhea" id="RHEA:51692"/>
        <dbReference type="ChEBI" id="CHEBI:15377"/>
        <dbReference type="ChEBI" id="CHEBI:18005"/>
        <dbReference type="ChEBI" id="CHEBI:29934"/>
        <dbReference type="ChEBI" id="CHEBI:59789"/>
        <dbReference type="ChEBI" id="CHEBI:134278"/>
    </reaction>
</comment>
<comment type="subunit">
    <text evidence="1">Homodimer.</text>
</comment>
<comment type="similarity">
    <text evidence="1">Belongs to the class I-like SAM-binding methyltransferase superfamily. Cx-SAM synthase family.</text>
</comment>
<feature type="chain" id="PRO_0000314324" description="Carboxy-S-adenosyl-L-methionine synthase">
    <location>
        <begin position="1"/>
        <end position="247"/>
    </location>
</feature>
<feature type="binding site" evidence="1">
    <location>
        <position position="39"/>
    </location>
    <ligand>
        <name>S-adenosyl-L-methionine</name>
        <dbReference type="ChEBI" id="CHEBI:59789"/>
    </ligand>
</feature>
<feature type="binding site" evidence="1">
    <location>
        <begin position="64"/>
        <end position="66"/>
    </location>
    <ligand>
        <name>S-adenosyl-L-methionine</name>
        <dbReference type="ChEBI" id="CHEBI:59789"/>
    </ligand>
</feature>
<feature type="binding site" evidence="1">
    <location>
        <begin position="89"/>
        <end position="90"/>
    </location>
    <ligand>
        <name>S-adenosyl-L-methionine</name>
        <dbReference type="ChEBI" id="CHEBI:59789"/>
    </ligand>
</feature>
<feature type="binding site" evidence="1">
    <location>
        <begin position="117"/>
        <end position="118"/>
    </location>
    <ligand>
        <name>S-adenosyl-L-methionine</name>
        <dbReference type="ChEBI" id="CHEBI:59789"/>
    </ligand>
</feature>
<feature type="binding site" evidence="1">
    <location>
        <position position="132"/>
    </location>
    <ligand>
        <name>S-adenosyl-L-methionine</name>
        <dbReference type="ChEBI" id="CHEBI:59789"/>
    </ligand>
</feature>
<feature type="binding site" evidence="1">
    <location>
        <position position="199"/>
    </location>
    <ligand>
        <name>S-adenosyl-L-methionine</name>
        <dbReference type="ChEBI" id="CHEBI:59789"/>
    </ligand>
</feature>
<evidence type="ECO:0000255" key="1">
    <source>
        <dbReference type="HAMAP-Rule" id="MF_01589"/>
    </source>
</evidence>
<sequence>MSNRDTLFSAPIARLGDWTFDERVAEVFPDMIQRSVPGYSNIISMIGMLAERFVQPASQVYDLGCSLGAATLSVRRNVHHDGCKIIAVDNSPAMVERCRRHIDAFKAQTPVEVIEDDIRNITIENASMVVLNFTLQFLNPDDRQLLLNKIFQGLNPGGALVLSEKFSFEDSVVGELLFNMHHDFKRANGYSELEISQKRSMLENVMLTDSVETHKARLRKAGFEHSELWFQCFNFGSLVAVKGGSAT</sequence>
<reference key="1">
    <citation type="journal article" date="2010" name="PLoS ONE">
        <title>Genome sequence of Cronobacter sakazakii BAA-894 and comparative genomic hybridization analysis with other Cronobacter species.</title>
        <authorList>
            <person name="Kucerova E."/>
            <person name="Clifton S.W."/>
            <person name="Xia X.Q."/>
            <person name="Long F."/>
            <person name="Porwollik S."/>
            <person name="Fulton L."/>
            <person name="Fronick C."/>
            <person name="Minx P."/>
            <person name="Kyung K."/>
            <person name="Warren W."/>
            <person name="Fulton R."/>
            <person name="Feng D."/>
            <person name="Wollam A."/>
            <person name="Shah N."/>
            <person name="Bhonagiri V."/>
            <person name="Nash W.E."/>
            <person name="Hallsworth-Pepin K."/>
            <person name="Wilson R.K."/>
            <person name="McClelland M."/>
            <person name="Forsythe S.J."/>
        </authorList>
    </citation>
    <scope>NUCLEOTIDE SEQUENCE [LARGE SCALE GENOMIC DNA]</scope>
    <source>
        <strain>ATCC BAA-894</strain>
    </source>
</reference>
<dbReference type="EC" id="2.1.3.-" evidence="1"/>
<dbReference type="EMBL" id="CP000783">
    <property type="protein sequence ID" value="ABU76631.1"/>
    <property type="molecule type" value="Genomic_DNA"/>
</dbReference>
<dbReference type="RefSeq" id="WP_012124456.1">
    <property type="nucleotide sequence ID" value="NC_009778.1"/>
</dbReference>
<dbReference type="SMR" id="A7MEB1"/>
<dbReference type="KEGG" id="esa:ESA_01371"/>
<dbReference type="PATRIC" id="fig|290339.8.peg.1215"/>
<dbReference type="HOGENOM" id="CLU_078475_0_0_6"/>
<dbReference type="Proteomes" id="UP000000260">
    <property type="component" value="Chromosome"/>
</dbReference>
<dbReference type="GO" id="GO:0016743">
    <property type="term" value="F:carboxyl- or carbamoyltransferase activity"/>
    <property type="evidence" value="ECO:0007669"/>
    <property type="project" value="UniProtKB-UniRule"/>
</dbReference>
<dbReference type="GO" id="GO:1904047">
    <property type="term" value="F:S-adenosyl-L-methionine binding"/>
    <property type="evidence" value="ECO:0007669"/>
    <property type="project" value="UniProtKB-UniRule"/>
</dbReference>
<dbReference type="GO" id="GO:0002098">
    <property type="term" value="P:tRNA wobble uridine modification"/>
    <property type="evidence" value="ECO:0007669"/>
    <property type="project" value="InterPro"/>
</dbReference>
<dbReference type="CDD" id="cd02440">
    <property type="entry name" value="AdoMet_MTases"/>
    <property type="match status" value="1"/>
</dbReference>
<dbReference type="Gene3D" id="3.40.50.150">
    <property type="entry name" value="Vaccinia Virus protein VP39"/>
    <property type="match status" value="1"/>
</dbReference>
<dbReference type="HAMAP" id="MF_01589">
    <property type="entry name" value="Cx_SAM_synthase"/>
    <property type="match status" value="1"/>
</dbReference>
<dbReference type="InterPro" id="IPR005271">
    <property type="entry name" value="CmoA"/>
</dbReference>
<dbReference type="InterPro" id="IPR041698">
    <property type="entry name" value="Methyltransf_25"/>
</dbReference>
<dbReference type="InterPro" id="IPR029063">
    <property type="entry name" value="SAM-dependent_MTases_sf"/>
</dbReference>
<dbReference type="NCBIfam" id="TIGR00740">
    <property type="entry name" value="carboxy-S-adenosyl-L-methionine synthase CmoA"/>
    <property type="match status" value="1"/>
</dbReference>
<dbReference type="NCBIfam" id="NF011995">
    <property type="entry name" value="PRK15451.1"/>
    <property type="match status" value="1"/>
</dbReference>
<dbReference type="PANTHER" id="PTHR43861:SF2">
    <property type="entry name" value="CARBOXY-S-ADENOSYL-L-METHIONINE SYNTHASE"/>
    <property type="match status" value="1"/>
</dbReference>
<dbReference type="PANTHER" id="PTHR43861">
    <property type="entry name" value="TRANS-ACONITATE 2-METHYLTRANSFERASE-RELATED"/>
    <property type="match status" value="1"/>
</dbReference>
<dbReference type="Pfam" id="PF13649">
    <property type="entry name" value="Methyltransf_25"/>
    <property type="match status" value="1"/>
</dbReference>
<dbReference type="PIRSF" id="PIRSF006325">
    <property type="entry name" value="MeTrfase_bac"/>
    <property type="match status" value="1"/>
</dbReference>
<dbReference type="SUPFAM" id="SSF53335">
    <property type="entry name" value="S-adenosyl-L-methionine-dependent methyltransferases"/>
    <property type="match status" value="1"/>
</dbReference>
<proteinExistence type="inferred from homology"/>
<gene>
    <name evidence="1" type="primary">cmoA</name>
    <name type="ordered locus">ESA_01371</name>
</gene>
<keyword id="KW-1185">Reference proteome</keyword>
<keyword id="KW-0949">S-adenosyl-L-methionine</keyword>
<keyword id="KW-0808">Transferase</keyword>
<organism>
    <name type="scientific">Cronobacter sakazakii (strain ATCC BAA-894)</name>
    <name type="common">Enterobacter sakazakii</name>
    <dbReference type="NCBI Taxonomy" id="290339"/>
    <lineage>
        <taxon>Bacteria</taxon>
        <taxon>Pseudomonadati</taxon>
        <taxon>Pseudomonadota</taxon>
        <taxon>Gammaproteobacteria</taxon>
        <taxon>Enterobacterales</taxon>
        <taxon>Enterobacteriaceae</taxon>
        <taxon>Cronobacter</taxon>
    </lineage>
</organism>
<protein>
    <recommendedName>
        <fullName evidence="1">Carboxy-S-adenosyl-L-methionine synthase</fullName>
        <shortName evidence="1">Cx-SAM synthase</shortName>
        <ecNumber evidence="1">2.1.3.-</ecNumber>
    </recommendedName>
</protein>
<name>CMOA_CROS8</name>